<sequence length="282" mass="31340">MQTLKSQRAMPTATPSDQKTTAFLTIENVSKVYPTAKGPYTVLENVNLTVNEGEFICVIGHSGCGKSTLLNMVSGFASPTDGSVQVGGKIITEPGPDRMVVFQNYALLPWLTALENVYIAVDAVHSQKTEAEKRAIAKDHLAMVGLTDSMDKKPGQISGGMKQRVSIARALAIRPEVLILDEPFGALDAITKEELQEELLQIWNDHRCTVLMITHDIDEALFLADRLVMMTNGPHANIGEIMTIPFSRPRDRDRIMEDPTYYQLRNYALDFLYNRFAHDDVA</sequence>
<keyword id="KW-0067">ATP-binding</keyword>
<keyword id="KW-0997">Cell inner membrane</keyword>
<keyword id="KW-1003">Cell membrane</keyword>
<keyword id="KW-0406">Ion transport</keyword>
<keyword id="KW-0472">Membrane</keyword>
<keyword id="KW-0547">Nucleotide-binding</keyword>
<keyword id="KW-1185">Reference proteome</keyword>
<keyword id="KW-1278">Translocase</keyword>
<keyword id="KW-0813">Transport</keyword>
<gene>
    <name type="primary">cmpD</name>
    <name type="ordered locus">slr0044</name>
</gene>
<organism>
    <name type="scientific">Synechocystis sp. (strain ATCC 27184 / PCC 6803 / Kazusa)</name>
    <dbReference type="NCBI Taxonomy" id="1111708"/>
    <lineage>
        <taxon>Bacteria</taxon>
        <taxon>Bacillati</taxon>
        <taxon>Cyanobacteriota</taxon>
        <taxon>Cyanophyceae</taxon>
        <taxon>Synechococcales</taxon>
        <taxon>Merismopediaceae</taxon>
        <taxon>Synechocystis</taxon>
    </lineage>
</organism>
<accession>Q55463</accession>
<evidence type="ECO:0000250" key="1"/>
<evidence type="ECO:0000255" key="2">
    <source>
        <dbReference type="PROSITE-ProRule" id="PRU00434"/>
    </source>
</evidence>
<evidence type="ECO:0000305" key="3"/>
<feature type="chain" id="PRO_0000341959" description="Bicarbonate transport ATP-binding protein CmpD">
    <location>
        <begin position="1"/>
        <end position="282"/>
    </location>
</feature>
<feature type="domain" description="ABC transporter" evidence="2">
    <location>
        <begin position="24"/>
        <end position="257"/>
    </location>
</feature>
<feature type="binding site" evidence="2">
    <location>
        <begin position="60"/>
        <end position="67"/>
    </location>
    <ligand>
        <name>ATP</name>
        <dbReference type="ChEBI" id="CHEBI:30616"/>
    </ligand>
</feature>
<comment type="function">
    <text evidence="1">Part of the ABC transporter complex CmpABCD involved in bicarbonate transport. Responsible for energy coupling to the transport system (By similarity).</text>
</comment>
<comment type="subunit">
    <text evidence="1">The complex is composed of two ATP-binding proteins (CmpC and CmpD), a transmembrane protein (CmpB) and a solute-binding protein (CmpA).</text>
</comment>
<comment type="subcellular location">
    <subcellularLocation>
        <location evidence="3">Cell inner membrane</location>
        <topology evidence="3">Peripheral membrane protein</topology>
    </subcellularLocation>
</comment>
<comment type="induction">
    <text>By carbon dioxide-limited conditions, probably via CmpR.</text>
</comment>
<comment type="similarity">
    <text evidence="3">Belongs to the ABC transporter superfamily. Nitrate/nitrite/cyanate uptake transporter (NitT) (TC 3.A.1.16) family.</text>
</comment>
<reference key="1">
    <citation type="journal article" date="1996" name="DNA Res.">
        <title>Sequence analysis of the genome of the unicellular cyanobacterium Synechocystis sp. strain PCC6803. II. Sequence determination of the entire genome and assignment of potential protein-coding regions.</title>
        <authorList>
            <person name="Kaneko T."/>
            <person name="Sato S."/>
            <person name="Kotani H."/>
            <person name="Tanaka A."/>
            <person name="Asamizu E."/>
            <person name="Nakamura Y."/>
            <person name="Miyajima N."/>
            <person name="Hirosawa M."/>
            <person name="Sugiura M."/>
            <person name="Sasamoto S."/>
            <person name="Kimura T."/>
            <person name="Hosouchi T."/>
            <person name="Matsuno A."/>
            <person name="Muraki A."/>
            <person name="Nakazaki N."/>
            <person name="Naruo K."/>
            <person name="Okumura S."/>
            <person name="Shimpo S."/>
            <person name="Takeuchi C."/>
            <person name="Wada T."/>
            <person name="Watanabe A."/>
            <person name="Yamada M."/>
            <person name="Yasuda M."/>
            <person name="Tabata S."/>
        </authorList>
    </citation>
    <scope>NUCLEOTIDE SEQUENCE [LARGE SCALE GENOMIC DNA]</scope>
    <source>
        <strain>ATCC 27184 / PCC 6803 / Kazusa</strain>
    </source>
</reference>
<reference key="2">
    <citation type="journal article" date="2001" name="J. Bacteriol.">
        <title>Involvement of a CbbR homolog in low CO2-induced activation of the bicarbonate transporter operon in cyanobacteria.</title>
        <authorList>
            <person name="Omata T."/>
            <person name="Gohta S."/>
            <person name="Takahashi Y."/>
            <person name="Harano Y."/>
            <person name="Maeda S."/>
        </authorList>
    </citation>
    <scope>REGULATION BY CMPR</scope>
</reference>
<protein>
    <recommendedName>
        <fullName>Bicarbonate transport ATP-binding protein CmpD</fullName>
        <ecNumber>7.6.2.-</ecNumber>
    </recommendedName>
</protein>
<name>CMPD_SYNY3</name>
<dbReference type="EC" id="7.6.2.-"/>
<dbReference type="EMBL" id="BA000022">
    <property type="protein sequence ID" value="BAA10807.1"/>
    <property type="molecule type" value="Genomic_DNA"/>
</dbReference>
<dbReference type="PIR" id="S75960">
    <property type="entry name" value="S75960"/>
</dbReference>
<dbReference type="SMR" id="Q55463"/>
<dbReference type="STRING" id="1148.gene:10500311"/>
<dbReference type="PaxDb" id="1148-1001320"/>
<dbReference type="EnsemblBacteria" id="BAA10807">
    <property type="protein sequence ID" value="BAA10807"/>
    <property type="gene ID" value="BAA10807"/>
</dbReference>
<dbReference type="KEGG" id="syn:slr0044"/>
<dbReference type="eggNOG" id="COG1116">
    <property type="taxonomic scope" value="Bacteria"/>
</dbReference>
<dbReference type="InParanoid" id="Q55463"/>
<dbReference type="PhylomeDB" id="Q55463"/>
<dbReference type="Proteomes" id="UP000001425">
    <property type="component" value="Chromosome"/>
</dbReference>
<dbReference type="GO" id="GO:0005886">
    <property type="term" value="C:plasma membrane"/>
    <property type="evidence" value="ECO:0007669"/>
    <property type="project" value="UniProtKB-SubCell"/>
</dbReference>
<dbReference type="GO" id="GO:0005524">
    <property type="term" value="F:ATP binding"/>
    <property type="evidence" value="ECO:0007669"/>
    <property type="project" value="UniProtKB-KW"/>
</dbReference>
<dbReference type="GO" id="GO:0016887">
    <property type="term" value="F:ATP hydrolysis activity"/>
    <property type="evidence" value="ECO:0007669"/>
    <property type="project" value="InterPro"/>
</dbReference>
<dbReference type="GO" id="GO:0015112">
    <property type="term" value="F:nitrate transmembrane transporter activity"/>
    <property type="evidence" value="ECO:0007669"/>
    <property type="project" value="InterPro"/>
</dbReference>
<dbReference type="GO" id="GO:0006811">
    <property type="term" value="P:monoatomic ion transport"/>
    <property type="evidence" value="ECO:0007669"/>
    <property type="project" value="UniProtKB-KW"/>
</dbReference>
<dbReference type="CDD" id="cd03293">
    <property type="entry name" value="ABC_NrtD_SsuB_transporters"/>
    <property type="match status" value="1"/>
</dbReference>
<dbReference type="Gene3D" id="3.40.50.300">
    <property type="entry name" value="P-loop containing nucleotide triphosphate hydrolases"/>
    <property type="match status" value="1"/>
</dbReference>
<dbReference type="InterPro" id="IPR003593">
    <property type="entry name" value="AAA+_ATPase"/>
</dbReference>
<dbReference type="InterPro" id="IPR003439">
    <property type="entry name" value="ABC_transporter-like_ATP-bd"/>
</dbReference>
<dbReference type="InterPro" id="IPR017871">
    <property type="entry name" value="ABC_transporter-like_CS"/>
</dbReference>
<dbReference type="InterPro" id="IPR050166">
    <property type="entry name" value="ABC_transporter_ATP-bind"/>
</dbReference>
<dbReference type="InterPro" id="IPR005890">
    <property type="entry name" value="NO3_transporter_ATP-bd-like"/>
</dbReference>
<dbReference type="InterPro" id="IPR027417">
    <property type="entry name" value="P-loop_NTPase"/>
</dbReference>
<dbReference type="NCBIfam" id="TIGR01184">
    <property type="entry name" value="ntrCD"/>
    <property type="match status" value="1"/>
</dbReference>
<dbReference type="PANTHER" id="PTHR42788:SF7">
    <property type="entry name" value="NITRATE ABC TRANSPORTER ATP-BINDING PROTEIN"/>
    <property type="match status" value="1"/>
</dbReference>
<dbReference type="PANTHER" id="PTHR42788">
    <property type="entry name" value="TAURINE IMPORT ATP-BINDING PROTEIN-RELATED"/>
    <property type="match status" value="1"/>
</dbReference>
<dbReference type="Pfam" id="PF00005">
    <property type="entry name" value="ABC_tran"/>
    <property type="match status" value="1"/>
</dbReference>
<dbReference type="SMART" id="SM00382">
    <property type="entry name" value="AAA"/>
    <property type="match status" value="1"/>
</dbReference>
<dbReference type="SUPFAM" id="SSF52540">
    <property type="entry name" value="P-loop containing nucleoside triphosphate hydrolases"/>
    <property type="match status" value="1"/>
</dbReference>
<dbReference type="PROSITE" id="PS00211">
    <property type="entry name" value="ABC_TRANSPORTER_1"/>
    <property type="match status" value="1"/>
</dbReference>
<dbReference type="PROSITE" id="PS50893">
    <property type="entry name" value="ABC_TRANSPORTER_2"/>
    <property type="match status" value="1"/>
</dbReference>
<proteinExistence type="evidence at transcript level"/>